<evidence type="ECO:0000250" key="1"/>
<evidence type="ECO:0000250" key="2">
    <source>
        <dbReference type="UniProtKB" id="P04517"/>
    </source>
</evidence>
<evidence type="ECO:0000250" key="3">
    <source>
        <dbReference type="UniProtKB" id="P13529"/>
    </source>
</evidence>
<evidence type="ECO:0000250" key="4">
    <source>
        <dbReference type="UniProtKB" id="P17767"/>
    </source>
</evidence>
<evidence type="ECO:0000250" key="5">
    <source>
        <dbReference type="UniProtKB" id="P18247"/>
    </source>
</evidence>
<evidence type="ECO:0000250" key="6">
    <source>
        <dbReference type="UniProtKB" id="P21231"/>
    </source>
</evidence>
<evidence type="ECO:0000250" key="7">
    <source>
        <dbReference type="UniProtKB" id="P89509"/>
    </source>
</evidence>
<evidence type="ECO:0000255" key="8"/>
<evidence type="ECO:0000255" key="9">
    <source>
        <dbReference type="PROSITE-ProRule" id="PRU00539"/>
    </source>
</evidence>
<evidence type="ECO:0000255" key="10">
    <source>
        <dbReference type="PROSITE-ProRule" id="PRU00541"/>
    </source>
</evidence>
<evidence type="ECO:0000255" key="11">
    <source>
        <dbReference type="PROSITE-ProRule" id="PRU00542"/>
    </source>
</evidence>
<evidence type="ECO:0000255" key="12">
    <source>
        <dbReference type="PROSITE-ProRule" id="PRU00766"/>
    </source>
</evidence>
<evidence type="ECO:0000255" key="13">
    <source>
        <dbReference type="PROSITE-ProRule" id="PRU01080"/>
    </source>
</evidence>
<evidence type="ECO:0000255" key="14">
    <source>
        <dbReference type="PROSITE-ProRule" id="PRU01219"/>
    </source>
</evidence>
<evidence type="ECO:0000269" key="15">
    <source>
    </source>
</evidence>
<evidence type="ECO:0000269" key="16">
    <source>
    </source>
</evidence>
<evidence type="ECO:0000269" key="17">
    <source>
    </source>
</evidence>
<evidence type="ECO:0000269" key="18">
    <source>
    </source>
</evidence>
<evidence type="ECO:0000305" key="19"/>
<evidence type="ECO:0007744" key="20">
    <source>
        <dbReference type="PDB" id="3MMG"/>
    </source>
</evidence>
<evidence type="ECO:0007829" key="21">
    <source>
        <dbReference type="PDB" id="3MMG"/>
    </source>
</evidence>
<name>POLG_TVMV</name>
<proteinExistence type="evidence at protein level"/>
<dbReference type="EC" id="3.4.21.-"/>
<dbReference type="EC" id="3.4.22.45" evidence="2"/>
<dbReference type="EC" id="3.6.4.-"/>
<dbReference type="EC" id="3.4.22.44"/>
<dbReference type="EC" id="2.7.7.48"/>
<dbReference type="EMBL" id="X04083">
    <property type="protein sequence ID" value="CAA27720.1"/>
    <property type="molecule type" value="Genomic_RNA"/>
</dbReference>
<dbReference type="PIR" id="A23647">
    <property type="entry name" value="GNVSTV"/>
</dbReference>
<dbReference type="RefSeq" id="NP_056867.1">
    <molecule id="P09814-1"/>
    <property type="nucleotide sequence ID" value="NC_001768.1"/>
</dbReference>
<dbReference type="PDB" id="3MMG">
    <property type="method" value="X-ray"/>
    <property type="resolution" value="1.70 A"/>
    <property type="chains" value="A/B=2002-2242, C/D=2753-2760"/>
</dbReference>
<dbReference type="PDBsum" id="3MMG"/>
<dbReference type="SMR" id="P09814"/>
<dbReference type="MEROPS" id="C04.003"/>
<dbReference type="MEROPS" id="C06.001"/>
<dbReference type="GeneID" id="1494056"/>
<dbReference type="KEGG" id="vg:1494056"/>
<dbReference type="EvolutionaryTrace" id="P09814"/>
<dbReference type="Proteomes" id="UP000007549">
    <property type="component" value="Genome"/>
</dbReference>
<dbReference type="GO" id="GO:0019029">
    <property type="term" value="C:helical viral capsid"/>
    <property type="evidence" value="ECO:0007669"/>
    <property type="project" value="UniProtKB-KW"/>
</dbReference>
<dbReference type="GO" id="GO:0044161">
    <property type="term" value="C:host cell cytoplasmic vesicle"/>
    <property type="evidence" value="ECO:0007669"/>
    <property type="project" value="UniProtKB-SubCell"/>
</dbReference>
<dbReference type="GO" id="GO:0042025">
    <property type="term" value="C:host cell nucleus"/>
    <property type="evidence" value="ECO:0007669"/>
    <property type="project" value="UniProtKB-SubCell"/>
</dbReference>
<dbReference type="GO" id="GO:0005524">
    <property type="term" value="F:ATP binding"/>
    <property type="evidence" value="ECO:0007669"/>
    <property type="project" value="UniProtKB-KW"/>
</dbReference>
<dbReference type="GO" id="GO:0004197">
    <property type="term" value="F:cysteine-type endopeptidase activity"/>
    <property type="evidence" value="ECO:0007669"/>
    <property type="project" value="InterPro"/>
</dbReference>
<dbReference type="GO" id="GO:0004386">
    <property type="term" value="F:helicase activity"/>
    <property type="evidence" value="ECO:0007669"/>
    <property type="project" value="UniProtKB-KW"/>
</dbReference>
<dbReference type="GO" id="GO:0016818">
    <property type="term" value="F:hydrolase activity, acting on acid anhydrides, in phosphorus-containing anhydrides"/>
    <property type="evidence" value="ECO:0007669"/>
    <property type="project" value="InterPro"/>
</dbReference>
<dbReference type="GO" id="GO:0003723">
    <property type="term" value="F:RNA binding"/>
    <property type="evidence" value="ECO:0007669"/>
    <property type="project" value="InterPro"/>
</dbReference>
<dbReference type="GO" id="GO:0003968">
    <property type="term" value="F:RNA-directed RNA polymerase activity"/>
    <property type="evidence" value="ECO:0007669"/>
    <property type="project" value="UniProtKB-KW"/>
</dbReference>
<dbReference type="GO" id="GO:0008236">
    <property type="term" value="F:serine-type peptidase activity"/>
    <property type="evidence" value="ECO:0007669"/>
    <property type="project" value="UniProtKB-KW"/>
</dbReference>
<dbReference type="GO" id="GO:0005198">
    <property type="term" value="F:structural molecule activity"/>
    <property type="evidence" value="ECO:0007669"/>
    <property type="project" value="InterPro"/>
</dbReference>
<dbReference type="GO" id="GO:0006351">
    <property type="term" value="P:DNA-templated transcription"/>
    <property type="evidence" value="ECO:0007669"/>
    <property type="project" value="InterPro"/>
</dbReference>
<dbReference type="GO" id="GO:0006508">
    <property type="term" value="P:proteolysis"/>
    <property type="evidence" value="ECO:0007669"/>
    <property type="project" value="UniProtKB-KW"/>
</dbReference>
<dbReference type="GO" id="GO:0052170">
    <property type="term" value="P:symbiont-mediated suppression of host innate immune response"/>
    <property type="evidence" value="ECO:0007669"/>
    <property type="project" value="UniProtKB-KW"/>
</dbReference>
<dbReference type="GO" id="GO:0039694">
    <property type="term" value="P:viral RNA genome replication"/>
    <property type="evidence" value="ECO:0007669"/>
    <property type="project" value="InterPro"/>
</dbReference>
<dbReference type="GO" id="GO:0075523">
    <property type="term" value="P:viral translational frameshifting"/>
    <property type="evidence" value="ECO:0007669"/>
    <property type="project" value="UniProtKB-KW"/>
</dbReference>
<dbReference type="CDD" id="cd23175">
    <property type="entry name" value="ps-ssRNAv_Potyviridae_RdRp"/>
    <property type="match status" value="1"/>
</dbReference>
<dbReference type="Gene3D" id="3.30.70.270">
    <property type="match status" value="1"/>
</dbReference>
<dbReference type="Gene3D" id="3.90.70.150">
    <property type="entry name" value="Helper component proteinase"/>
    <property type="match status" value="1"/>
</dbReference>
<dbReference type="Gene3D" id="3.40.50.300">
    <property type="entry name" value="P-loop containing nucleotide triphosphate hydrolases"/>
    <property type="match status" value="2"/>
</dbReference>
<dbReference type="Gene3D" id="2.40.10.10">
    <property type="entry name" value="Trypsin-like serine proteases"/>
    <property type="match status" value="2"/>
</dbReference>
<dbReference type="InterPro" id="IPR011545">
    <property type="entry name" value="DEAD/DEAH_box_helicase_dom"/>
</dbReference>
<dbReference type="InterPro" id="IPR043502">
    <property type="entry name" value="DNA/RNA_pol_sf"/>
</dbReference>
<dbReference type="InterPro" id="IPR001456">
    <property type="entry name" value="HC-pro"/>
</dbReference>
<dbReference type="InterPro" id="IPR031159">
    <property type="entry name" value="HC_PRO_CPD_dom"/>
</dbReference>
<dbReference type="InterPro" id="IPR042308">
    <property type="entry name" value="HC_PRO_CPD_sf"/>
</dbReference>
<dbReference type="InterPro" id="IPR014001">
    <property type="entry name" value="Helicase_ATP-bd"/>
</dbReference>
<dbReference type="InterPro" id="IPR001650">
    <property type="entry name" value="Helicase_C-like"/>
</dbReference>
<dbReference type="InterPro" id="IPR027417">
    <property type="entry name" value="P-loop_NTPase"/>
</dbReference>
<dbReference type="InterPro" id="IPR002540">
    <property type="entry name" value="Pept_S30_P1_potyvir"/>
</dbReference>
<dbReference type="InterPro" id="IPR009003">
    <property type="entry name" value="Peptidase_S1_PA"/>
</dbReference>
<dbReference type="InterPro" id="IPR043504">
    <property type="entry name" value="Peptidase_S1_PA_chymotrypsin"/>
</dbReference>
<dbReference type="InterPro" id="IPR001592">
    <property type="entry name" value="Poty_coat"/>
</dbReference>
<dbReference type="InterPro" id="IPR001730">
    <property type="entry name" value="Potyv_NIa-pro_dom"/>
</dbReference>
<dbReference type="InterPro" id="IPR039560">
    <property type="entry name" value="Potyvirid-P3"/>
</dbReference>
<dbReference type="InterPro" id="IPR013648">
    <property type="entry name" value="PP_Potyviridae"/>
</dbReference>
<dbReference type="InterPro" id="IPR043128">
    <property type="entry name" value="Rev_trsase/Diguanyl_cyclase"/>
</dbReference>
<dbReference type="InterPro" id="IPR001205">
    <property type="entry name" value="RNA-dir_pol_C"/>
</dbReference>
<dbReference type="InterPro" id="IPR007094">
    <property type="entry name" value="RNA-dir_pol_PSvirus"/>
</dbReference>
<dbReference type="PANTHER" id="PTHR43519">
    <property type="entry name" value="ATP-DEPENDENT RNA HELICASE HRPB"/>
    <property type="match status" value="1"/>
</dbReference>
<dbReference type="PANTHER" id="PTHR43519:SF1">
    <property type="entry name" value="ATP-DEPENDENT RNA HELICASE HRPB"/>
    <property type="match status" value="1"/>
</dbReference>
<dbReference type="Pfam" id="PF00270">
    <property type="entry name" value="DEAD"/>
    <property type="match status" value="1"/>
</dbReference>
<dbReference type="Pfam" id="PF00271">
    <property type="entry name" value="Helicase_C"/>
    <property type="match status" value="1"/>
</dbReference>
<dbReference type="Pfam" id="PF00863">
    <property type="entry name" value="Peptidase_C4"/>
    <property type="match status" value="1"/>
</dbReference>
<dbReference type="Pfam" id="PF00851">
    <property type="entry name" value="Peptidase_C6"/>
    <property type="match status" value="1"/>
</dbReference>
<dbReference type="Pfam" id="PF01577">
    <property type="entry name" value="Peptidase_S30"/>
    <property type="match status" value="1"/>
</dbReference>
<dbReference type="Pfam" id="PF00767">
    <property type="entry name" value="Poty_coat"/>
    <property type="match status" value="1"/>
</dbReference>
<dbReference type="Pfam" id="PF08440">
    <property type="entry name" value="Poty_PP"/>
    <property type="match status" value="1"/>
</dbReference>
<dbReference type="Pfam" id="PF13608">
    <property type="entry name" value="Potyvirid-P3"/>
    <property type="match status" value="1"/>
</dbReference>
<dbReference type="Pfam" id="PF00680">
    <property type="entry name" value="RdRP_1"/>
    <property type="match status" value="1"/>
</dbReference>
<dbReference type="PRINTS" id="PR00966">
    <property type="entry name" value="NIAPOTYPTASE"/>
</dbReference>
<dbReference type="SMART" id="SM00487">
    <property type="entry name" value="DEXDc"/>
    <property type="match status" value="1"/>
</dbReference>
<dbReference type="SMART" id="SM00490">
    <property type="entry name" value="HELICc"/>
    <property type="match status" value="1"/>
</dbReference>
<dbReference type="SUPFAM" id="SSF56672">
    <property type="entry name" value="DNA/RNA polymerases"/>
    <property type="match status" value="1"/>
</dbReference>
<dbReference type="SUPFAM" id="SSF52540">
    <property type="entry name" value="P-loop containing nucleoside triphosphate hydrolases"/>
    <property type="match status" value="2"/>
</dbReference>
<dbReference type="SUPFAM" id="SSF50494">
    <property type="entry name" value="Trypsin-like serine proteases"/>
    <property type="match status" value="1"/>
</dbReference>
<dbReference type="PROSITE" id="PS51744">
    <property type="entry name" value="HC_PRO_CPD"/>
    <property type="match status" value="1"/>
</dbReference>
<dbReference type="PROSITE" id="PS51192">
    <property type="entry name" value="HELICASE_ATP_BIND_1"/>
    <property type="match status" value="1"/>
</dbReference>
<dbReference type="PROSITE" id="PS51194">
    <property type="entry name" value="HELICASE_CTER"/>
    <property type="match status" value="1"/>
</dbReference>
<dbReference type="PROSITE" id="PS51436">
    <property type="entry name" value="POTYVIRUS_NIA_PRO"/>
    <property type="match status" value="1"/>
</dbReference>
<dbReference type="PROSITE" id="PS51871">
    <property type="entry name" value="PV_P1_PRO"/>
    <property type="match status" value="1"/>
</dbReference>
<dbReference type="PROSITE" id="PS51195">
    <property type="entry name" value="Q_MOTIF"/>
    <property type="match status" value="1"/>
</dbReference>
<dbReference type="PROSITE" id="PS50507">
    <property type="entry name" value="RDRP_SSRNA_POS"/>
    <property type="match status" value="1"/>
</dbReference>
<comment type="function">
    <molecule>Helper component proteinase</molecule>
    <text evidence="2">Required for aphid transmission and also has proteolytic activity. Only cleaves a Gly-Gly dipeptide at its own C-terminus. Interacts with virions and aphid stylets. Acts as a suppressor of RNA-mediated gene silencing, also known as post-transcriptional gene silencing (PTGS), a mechanism of plant viral defense that limits the accumulation of viral RNAs. May have RNA-binding activity.</text>
</comment>
<comment type="function">
    <molecule>Cytoplasmic inclusion protein</molecule>
    <text>Has helicase activity. It may be involved in replication.</text>
</comment>
<comment type="function">
    <molecule>6 kDa protein 1</molecule>
    <text evidence="3 7">Indispensable for virus replication (By similarity). Reduces the abundance of host transcripts related to jasmonic acid biosynthesis therefore altering the host defenses (By similarity). In order to increase its own stability, decreases host protein degradation pathways (By similarity).</text>
</comment>
<comment type="function">
    <molecule>6 kDa protein 2</molecule>
    <text evidence="16">Indispensable for virus replication.</text>
</comment>
<comment type="function">
    <molecule>Viral genome-linked protein</molecule>
    <text evidence="5">Mediates the cap-independent, EIF4E-dependent translation of viral genomic RNAs (By similarity). Binds to the cap-binding site of host EIF4E and thus interferes with the host EIF4E-dependent mRNA export and translation (By similarity). VPg-RNA directly binds EIF4E and is a template for transcription (By similarity). Also forms trimeric complexes with EIF4E-EIF4G, which are templates for translation (By similarity).</text>
</comment>
<comment type="function">
    <molecule>Nuclear inclusion protein A</molecule>
    <text evidence="2 17">Has RNA-binding and proteolytic activities (By similarity). Main protease that processes most of the polyprotein cleavages (PubMed:20862670).</text>
</comment>
<comment type="function">
    <molecule>Nuclear inclusion protein B</molecule>
    <text>An RNA-dependent RNA polymerase that plays an essential role in the virus replication.</text>
</comment>
<comment type="function">
    <molecule>Capsid protein</molecule>
    <text evidence="2">Involved in aphid transmission, cell-to-cell and systemis movement, encapsidation of the viral RNA and in the regulation of viral RNA amplification.</text>
</comment>
<comment type="catalytic activity">
    <molecule>Nuclear inclusion protein B</molecule>
    <reaction evidence="9">
        <text>RNA(n) + a ribonucleoside 5'-triphosphate = RNA(n+1) + diphosphate</text>
        <dbReference type="Rhea" id="RHEA:21248"/>
        <dbReference type="Rhea" id="RHEA-COMP:14527"/>
        <dbReference type="Rhea" id="RHEA-COMP:17342"/>
        <dbReference type="ChEBI" id="CHEBI:33019"/>
        <dbReference type="ChEBI" id="CHEBI:61557"/>
        <dbReference type="ChEBI" id="CHEBI:140395"/>
        <dbReference type="EC" id="2.7.7.48"/>
    </reaction>
</comment>
<comment type="catalytic activity">
    <molecule>Nuclear inclusion protein A</molecule>
    <reaction evidence="2">
        <text>Hydrolyzes glutaminyl bonds, and activity is further restricted by preferences for the amino acids in P6 - P1' that vary with the species of potyvirus, e.g. Glu-Xaa-Xaa-Tyr-Xaa-Gln-|-(Ser or Gly) for the enzyme from tobacco etch virus. The natural substrate is the viral polyprotein, but other proteins and oligopeptides containing the appropriate consensus sequence are also cleaved.</text>
        <dbReference type="EC" id="3.4.22.44"/>
    </reaction>
</comment>
<comment type="catalytic activity">
    <molecule>Helper component proteinase</molecule>
    <reaction evidence="2">
        <text>Hydrolyzes a Gly-|-Gly bond at its own C-terminus, commonly in the sequence -Tyr-Xaa-Val-Gly-|-Gly, in the processing of the potyviral polyprotein.</text>
        <dbReference type="EC" id="3.4.22.45"/>
    </reaction>
</comment>
<comment type="biophysicochemical properties">
    <kinetics>
        <KM evidence="17">0.082 mM for TETVRFQSGTRR-NH2</KM>
    </kinetics>
</comment>
<comment type="subunit">
    <molecule>Viral genome-linked protein</molecule>
    <text evidence="5">Interacts with host eIF4E protein (via cap-binding region); this interaction mediates the translation of the VPg-viral RNA conjugates (By similarity). Part of a complex that comprises VPg, RNA, host EIF4E and EIF4G; this interaction mediates the translation of the VPg-viral RNA conjugates (By similarity).</text>
</comment>
<comment type="subcellular location">
    <molecule>6 kDa protein 1</molecule>
    <subcellularLocation>
        <location>Host cytoplasmic vesicle</location>
    </subcellularLocation>
    <text evidence="3">Probably colocalizes with 6K2-induced vesicles associated with host chloroplasts.</text>
</comment>
<comment type="subcellular location">
    <molecule>6 kDa protein 2</molecule>
    <subcellularLocation>
        <location evidence="16 18">Host cytoplasmic vesicle</location>
    </subcellularLocation>
    <text evidence="16">6K-induced vesicles associate with host chloroplasts.</text>
</comment>
<comment type="subcellular location">
    <molecule>Viral genome-linked protein</molecule>
    <subcellularLocation>
        <location evidence="6">Host nucleus</location>
    </subcellularLocation>
    <text evidence="6">Binds to host plant eIF4E proteins in the host nucleus.</text>
</comment>
<comment type="subcellular location">
    <molecule>Capsid protein</molecule>
    <subcellularLocation>
        <location evidence="19">Virion</location>
    </subcellularLocation>
</comment>
<comment type="alternative products">
    <event type="ribosomal frameshifting"/>
    <isoform>
        <id>P09814-1</id>
        <name>Genome polyprotein</name>
        <sequence type="displayed"/>
    </isoform>
    <isoform>
        <id>P0CK10-1</id>
        <name>P3N-PIPO polyprotein</name>
        <sequence type="external"/>
    </isoform>
</comment>
<comment type="domain">
    <molecule>6 kDa protein 2</molecule>
    <text evidence="18">The GxxxG motif is essential for the viral infection.</text>
</comment>
<comment type="domain">
    <molecule>Helper component proteinase</molecule>
    <text>The N-terminus is involved in interaction with stylets. The central part is involved in interaction with virions and the C-terminus is involved in cell-to cell movement of the virus.</text>
</comment>
<comment type="PTM">
    <molecule>Viral genome-linked protein</molecule>
    <text evidence="15">VPg is uridylylated by the polymerase and is covalently attached to the 5'-end of the genomic RNA. This uridylylated form acts as a nucleotide-peptide primer for the polymerase.</text>
</comment>
<comment type="PTM">
    <molecule>Genome polyprotein</molecule>
    <text evidence="1">Potyviral RNA is expressed as two polyproteins which undergo post-translational proteolytic processing. Genome polyprotein is processed by NIa-pro, P1 and HC-pro proteinases resulting in the production of at least ten individual proteins. P3N-PIPO polyprotein is cleaved by P1 and HC-pro proteinases resulting in the production of three individual proteins. The P1 proteinase and the HC-pro cleave only their respective C-termini autocatalytically. 6K1 is essential for proper proteolytic separation of P3 from CI (By similarity).</text>
</comment>
<comment type="miscellaneous">
    <molecule>Isoform Genome polyprotein</molecule>
    <text>Produced by conventional translation.</text>
</comment>
<comment type="similarity">
    <text evidence="19">Belongs to the potyviridae genome polyprotein family.</text>
</comment>
<reference key="1">
    <citation type="journal article" date="1986" name="Nucleic Acids Res.">
        <title>The nucleotide sequence of tobacco vein mottling virus RNA.</title>
        <authorList>
            <person name="Domier L.L."/>
            <person name="Franklin K.M."/>
            <person name="Shahabuddin M."/>
            <person name="Hellmann G.M."/>
            <person name="Overmeyer J.H."/>
            <person name="Hiremath S.T."/>
            <person name="Siaw M.F.E."/>
            <person name="Lomonossoff G.P."/>
            <person name="Shaw J.G."/>
            <person name="Rhoads R.E."/>
        </authorList>
    </citation>
    <scope>NUCLEOTIDE SEQUENCE [GENOMIC RNA]</scope>
</reference>
<reference key="2">
    <citation type="submission" date="1997-11" db="EMBL/GenBank/DDBJ databases">
        <authorList>
            <person name="Shaw J.G."/>
        </authorList>
    </citation>
    <scope>SEQUENCE REVISION</scope>
</reference>
<reference key="3">
    <citation type="journal article" date="1991" name="J. Virol.">
        <title>A tyrosine residue in the small nuclear inclusion protein of tobacco vein mottling virus links the VPg to the viral RNA.</title>
        <authorList>
            <person name="Murphy J.F."/>
            <person name="Rychlik W."/>
            <person name="Rhoads R.E."/>
            <person name="Hunt A.G."/>
            <person name="Shaw J.G."/>
        </authorList>
    </citation>
    <scope>PROTEIN SEQUENCE OF 1874-1888</scope>
    <scope>COVALENT RNA LINKAGE AT TYR-1878 (VPG)</scope>
    <scope>URIDYLYLATION AT TYR-1878</scope>
</reference>
<reference key="4">
    <citation type="journal article" date="2001" name="Virus Res.">
        <title>Potyvirus proteins: a wealth of functions.</title>
        <authorList>
            <person name="Urcuqui-Inchima S."/>
            <person name="Haenni A.L."/>
            <person name="Bernardi F."/>
        </authorList>
    </citation>
    <scope>REVIEW</scope>
</reference>
<reference key="5">
    <citation type="journal article" date="2010" name="J. Virol.">
        <title>Sequential recruitment of the endoplasmic reticulum and chloroplasts for plant potyvirus replication.</title>
        <authorList>
            <person name="Wei T."/>
            <person name="Huang T.S."/>
            <person name="McNeil J."/>
            <person name="Laliberte J.F."/>
            <person name="Hong J."/>
            <person name="Nelson R.S."/>
            <person name="Wang A."/>
        </authorList>
    </citation>
    <scope>FUNCTION (6 KDA PROTEIN 2)</scope>
    <scope>SUBCELLULAR LOCATION (6 KDA PROTEIN 2)</scope>
</reference>
<reference key="6">
    <citation type="journal article" date="2018" name="Plant Cell">
        <title>Turnip Mosaic Virus Uses the SNARE Protein VTI11 in an Unconventional Route for Replication Vesicle Trafficking.</title>
        <authorList>
            <person name="Cabanillas D.G."/>
            <person name="Jiang J."/>
            <person name="Movahed N."/>
            <person name="Germain H."/>
            <person name="Yamaji Y."/>
            <person name="Zheng H."/>
            <person name="Laliberte J.F."/>
        </authorList>
    </citation>
    <scope>FUNCTION (6 KDA PROTEIN 2)</scope>
    <scope>DOMAIN (6 KDA PROTEIN 2)</scope>
    <scope>MUTAGENESIS OF 1796-GLY--GLY-1800</scope>
    <scope>SUBCELLULAR LOCATION (6 KDA PROTEIN 2)</scope>
</reference>
<reference evidence="20" key="7">
    <citation type="journal article" date="2010" name="Protein Sci.">
        <title>Structural determinants of tobacco vein mottling virus protease substrate specificity.</title>
        <authorList>
            <person name="Sun P."/>
            <person name="Austin B.P."/>
            <person name="Toezser J."/>
            <person name="Waugh D.S."/>
        </authorList>
    </citation>
    <scope>X-RAY CRYSTALLOGRAPHY (1.70 ANGSTROMS) OF 2002-2242 AND 2753-2760</scope>
    <scope>MUTAGENESIS OF LYS-2066; LYS-2068 AND CYS-2152</scope>
    <scope>FUNCTION (NUCLEAR INCLUSION PROTEIN A)</scope>
    <scope>BIOPHYSICOCHEMICAL PROPERTIES (NUCLEAR INCLUSION PROTEIN A)</scope>
</reference>
<accession>P09814</accession>
<accession>Q84898</accession>
<accession>Q84899</accession>
<accession>Q84900</accession>
<accession>Q84901</accession>
<accession>Q84902</accession>
<keyword id="KW-0002">3D-structure</keyword>
<keyword id="KW-0067">ATP-binding</keyword>
<keyword id="KW-0167">Capsid protein</keyword>
<keyword id="KW-0191">Covalent protein-RNA linkage</keyword>
<keyword id="KW-0903">Direct protein sequencing</keyword>
<keyword id="KW-1139">Helical capsid protein</keyword>
<keyword id="KW-0347">Helicase</keyword>
<keyword id="KW-1036">Host cytoplasmic vesicle</keyword>
<keyword id="KW-1048">Host nucleus</keyword>
<keyword id="KW-0945">Host-virus interaction</keyword>
<keyword id="KW-0378">Hydrolase</keyword>
<keyword id="KW-1090">Inhibition of host innate immune response by virus</keyword>
<keyword id="KW-0547">Nucleotide-binding</keyword>
<keyword id="KW-0548">Nucleotidyltransferase</keyword>
<keyword id="KW-0597">Phosphoprotein</keyword>
<keyword id="KW-0645">Protease</keyword>
<keyword id="KW-0688">Ribosomal frameshifting</keyword>
<keyword id="KW-0696">RNA-directed RNA polymerase</keyword>
<keyword id="KW-0720">Serine protease</keyword>
<keyword id="KW-0941">Suppressor of RNA silencing</keyword>
<keyword id="KW-0788">Thiol protease</keyword>
<keyword id="KW-0808">Transferase</keyword>
<keyword id="KW-0899">Viral immunoevasion</keyword>
<keyword id="KW-0693">Viral RNA replication</keyword>
<keyword id="KW-0946">Virion</keyword>
<organism>
    <name type="scientific">Tobacco vein mottling virus</name>
    <name type="common">TVMV</name>
    <dbReference type="NCBI Taxonomy" id="12228"/>
    <lineage>
        <taxon>Viruses</taxon>
        <taxon>Riboviria</taxon>
        <taxon>Orthornavirae</taxon>
        <taxon>Pisuviricota</taxon>
        <taxon>Stelpaviricetes</taxon>
        <taxon>Patatavirales</taxon>
        <taxon>Potyviridae</taxon>
        <taxon>Potyvirus</taxon>
        <taxon>Potyvirus nicotianavenamaculae</taxon>
    </lineage>
</organism>
<protein>
    <recommendedName>
        <fullName>Genome polyprotein</fullName>
    </recommendedName>
    <component>
        <recommendedName>
            <fullName>P1 protease</fullName>
            <ecNumber>3.4.21.-</ecNumber>
        </recommendedName>
        <alternativeName>
            <fullName>Leader protease P1</fullName>
        </alternativeName>
        <alternativeName>
            <fullName>N-terminal protein</fullName>
        </alternativeName>
        <alternativeName>
            <fullName>P1 proteinase</fullName>
        </alternativeName>
    </component>
    <component>
        <recommendedName>
            <fullName>Helper component proteinase</fullName>
            <shortName>HC-pro</shortName>
            <ecNumber evidence="2">3.4.22.45</ecNumber>
        </recommendedName>
    </component>
    <component>
        <recommendedName>
            <fullName>Protein P3</fullName>
        </recommendedName>
    </component>
    <component>
        <recommendedName>
            <fullName>6 kDa protein 1</fullName>
            <shortName>6K1</shortName>
        </recommendedName>
    </component>
    <component>
        <recommendedName>
            <fullName>Cytoplasmic inclusion protein</fullName>
            <shortName>CI</shortName>
            <ecNumber>3.6.4.-</ecNumber>
        </recommendedName>
    </component>
    <component>
        <recommendedName>
            <fullName>6 kDa protein 2</fullName>
            <shortName>6K2</shortName>
        </recommendedName>
    </component>
    <component>
        <recommendedName>
            <fullName>Viral genome-linked protein</fullName>
        </recommendedName>
        <alternativeName>
            <fullName>VPg</fullName>
        </alternativeName>
    </component>
    <component>
        <recommendedName>
            <fullName>Nuclear inclusion protein A</fullName>
            <shortName>NI-a</shortName>
            <shortName>NIa</shortName>
            <ecNumber>3.4.22.44</ecNumber>
        </recommendedName>
        <alternativeName>
            <fullName>49 kDa proteinase</fullName>
            <shortName>49 kDa-Pro</shortName>
        </alternativeName>
        <alternativeName>
            <fullName>NIa-pro</fullName>
        </alternativeName>
    </component>
    <component>
        <recommendedName>
            <fullName>Nuclear inclusion protein B</fullName>
            <shortName>NI-b</shortName>
            <shortName>NIb</shortName>
            <ecNumber>2.7.7.48</ecNumber>
        </recommendedName>
        <alternativeName>
            <fullName>RNA-directed RNA polymerase</fullName>
        </alternativeName>
    </component>
    <component>
        <recommendedName>
            <fullName>Capsid protein</fullName>
            <shortName>CP</shortName>
        </recommendedName>
        <alternativeName>
            <fullName>Coat protein</fullName>
        </alternativeName>
    </component>
</protein>
<organismHost>
    <name type="scientific">Nicotiana tabacum</name>
    <name type="common">Common tobacco</name>
    <dbReference type="NCBI Taxonomy" id="4097"/>
</organismHost>
<organismHost>
    <name type="scientific">Rumex</name>
    <dbReference type="NCBI Taxonomy" id="3618"/>
</organismHost>
<sequence>MAATMIFGSFTHDLLGKAMSTIHSAVTAEKDIFSSIKERLERKRHGKICRMKNGSIYIKAASSTKVEKINAAAKKLADDKAAFLKAQPTIVDKIIVNEKIQVVEAEEVHKREDVQTVFFKKTKKRAPKLRATCSSSGLDNLYNAVANIAKASSLRVEVIHKKRVCGEFKQTRFGRALFIDVAHAKGHRRRIDCRMHRREQRTMHMFMRKTTKTEVRSKHLRKGDSGIVLLTQKIKGHLSGVRDEFFIVRGTCDDSLLEARARFSQSITLRATHFSTGDIFWKGFNASFQEQKAIGLDHTCTSDLPVEACGHVAALMCQSLFPCGKITCKRCIANLSNLDFDTFSELQGDRAMRILDVMRARFPSFTHTIRFLHDLFTQRRVTNPNTAAFREILRLIGDRNEAPFAHVNRLNEILLLGSKANPDSLAKASDSLLELARYLNNRTENIRNGSLKHFRNKISSKAHSNLALSCDNQLDQNGNFLWGLAGIAAKRFLNNYFETIDPEQGYDKYVIRKNPNGERKLAIGNFIISTNLEKLRDQLEGESIARVGITEECVSRKDGNYRYPCCCVTLEDGSPMYSELKMPTKNHLVIGNSGDPKYLDLPGEISNLMYIAKEGYCYINIFLAMLVNVDEANAKDFTKRVRDESVQKLGKWPSLIDVATECALLSTYYPAAASAELPRLLVDHAQKTIHVVDSYGSLNTGYHILKANTVSQLEKFASNTLESPMAQYKVGGLVYSENNDASAVKALTQAIFRPDVLSELIEKEPYLMVFALVSPGILMAMSNSGALEFGISKWISSDHSLVRMASILKTLASKVSVADTLALQKHIMRQNANFLCGELINGFQKKKSYTHATRFLLMISEENEMDDPVLNAGYRVLEASSHEIMEKTYLALLETSWSDLSLYGKFKSIWFTRKHFGRYKAELFPKEQTDLQGRYSNSLRFHYQSTLKRLRNKGSLCRERFLESISSARRRTTCAVFSLLHKAFPDVLKFINTLVIVSLSMQIYYMLVAIIHEHRAAKIKSAQLEERVLEDKTMLLYDDFKAKLPEGSFEEFLEYTRQRDKEVYEYLMMETTEIVEFQAKNTGQASLERIIAFVSLTLMLFDNERSDCVYKILTKFKGILGSVENNVRFQSLDTIVPTQEEKNMVIDFELDSDTAHTPQMQEQTFSDWWSNQIANNRVVPHYRTEGYFMQFTRNTASAVSHQIAHNEHKDIILMGAVGSGKSTGLPTNLCKFGGVLLLEPTRPLAENVTKQMRGSPFFASPTLRMRNLSTFGSSPITVMTTGFALHFFANNVKEFDRYQFIIFDEFHVLDSNAIAFRNLCHEYSYNGKIIKVSATPPGRECDLTTQYPVELLIEEQLSLRDFVDAQGTDAHADVVKKGDNILVYVASYNEVDQLSKMLNERGFLVTKVDGRTMKLGGVEIITKGSSIKKHFIVATNIIENGVTLDVDVVVDFGLKVVPNLDSDNRLVSYCKIPISLGERIQRFGRVGRNKPGVALRIGETIKGLVEIPSMIATEAAFLCFVYGLPVTTQNVSTSILSQVSVRQARVMCQFELPIFYTAHLVRYDGAMHPAIHNALKRFKLRDSEINLNTLAIPTSSSKTWYTGKCYKQLVGRLDIPDEIKIPFYTKEVPEKVPEQIWDVMVKFSSDAGFGRMTSAAACKVAYTLQTDIHSIQRTVQIIDRLLENEMKKRNHFNLVVNQSCSSHFMSLSSIMASLRAHYAKNHTGQNIEILQKAKAQLLEFSNLAIDPSTTEALRDFGYLEAVRFQSESEMARGLKLSGHWKWSLISRDLIVVSGVGIGLGCMLWQFFKEKMHEPVKFQGKSRRRLQFRKARDDKMGYIMHGEGDTIEHFFGAAYTKKGKSKGKTHGAGTKAHKFVNMYGVSPDEYSYVRYLDPVTGATLDESPMTDLNIVQEHFGEIRREAILADAMSPQQRNKGIQAYFVRNSTMPILKVDLTPHIPLKVCESNNIAGFPEREGELRRTGPTETLPFDALPPEKQEVAFESKALLKGVRDFNPISACVWLLENSSDGHSERLFGIGFGPYIIANQHLFRRNNGELTIKTMHGEFKVKNSTQLQMKPVEGRDIIVIKMAKDFPPFPQKLKFRQPTIKDRVCMVSTNFQQKSVSSLVSESSHIVHKEDTSFWQHWITTKDGQCGSPLVSIIDGNILGIHSLTHTTNGSNYFVEFPEKFVATYLDAADGWCKNWKFNADKISWGSFTLVEDAPEDDFMAKKTVAAIMDDLVRTQGEKRKWMLEAAHTNIQPVAHLQSQLVTKHIVKGRCKMFALYLQENADARDFFKSFMGAYGPSHLNKEAYIKDIMKYSKQIVVGSVDCDTFESSLKVLSRKMKEWGFENLEYVTDEQTIKNALNMDAAVGALYSGKKKQYFEDLSDDAVANLVQKSCLRLFKNKLGVWNGSLKAELRPFEKLIENKTRTFTAAPIETLLGGKVCVDDFNNHFYSKHIQCPWSVGMTKFYGGWNELLGKLPDGWVYCDADGSQFDSSLSPYLINAVLRLRLSSMEEWDVGQKMLQNLYTEIVYTPISTPDGTIVKKFKGNNSGQPSTVVDNTLMVVLAMYYALSKLGVDINSQEDVCKFFANGDDLIIAISPELEHVLDGFQQHFSDLGLNYDFSSRTRDKKELWFMSHRALSKDGILIPKLEPERIVSILEWDRSAEPHHRLEAICASMIEAWGYTDLLQNIRRFYKWTIEQEPYRSLAEQGLAPYLSEVALRRLYTSQIATDNELTDYYKEILANNEFLRETVRFQSDTVDAGKDKARDQKLADKPTLAIDRTKDKDVNTGTSGTFSIPRLKKAAMNMKLPKVGGSSVVNLDHLLTYKPAQEFVVNTRATHSQFKAWHTNVMAELELNEEQMKIVLNGFMIWCIENGTSPNISGVWTMMDGDEQVEYPIEPMVKHANPSLRQIMKHFSNLAEAYIRMRNSEQVYIPRYGLQRGLVDRNLAPFAFDFFEVNGATPVRAREAHAQMKAAALRNSQQRMFCLDGSVSGQEENTERHTVDDVNAQMHHLLGVKGV</sequence>
<feature type="chain" id="PRO_0000420031" description="Genome polyprotein">
    <location>
        <begin position="1"/>
        <end position="3023"/>
    </location>
</feature>
<feature type="chain" id="PRO_0000040483" description="P1 protease" evidence="8">
    <location>
        <begin position="1"/>
        <end position="274"/>
    </location>
</feature>
<feature type="chain" id="PRO_0000040484" description="Helper component proteinase" evidence="8">
    <location>
        <begin position="275"/>
        <end position="731"/>
    </location>
</feature>
<feature type="chain" id="PRO_0000040485" description="Protein P3" evidence="1">
    <location>
        <begin position="732"/>
        <end position="1078"/>
    </location>
</feature>
<feature type="chain" id="PRO_0000040486" description="6 kDa protein 1" evidence="1">
    <location>
        <begin position="1079"/>
        <end position="1130"/>
    </location>
</feature>
<feature type="chain" id="PRO_0000040487" description="Cytoplasmic inclusion protein" evidence="1">
    <location>
        <begin position="1131"/>
        <end position="1765"/>
    </location>
</feature>
<feature type="chain" id="PRO_0000040488" description="6 kDa protein 2" evidence="1">
    <location>
        <begin position="1766"/>
        <end position="1818"/>
    </location>
</feature>
<feature type="chain" id="PRO_0000040489" description="Viral genome-linked protein" evidence="1">
    <location>
        <begin position="1819"/>
        <end position="2001"/>
    </location>
</feature>
<feature type="chain" id="PRO_0000040490" description="Nuclear inclusion protein A" evidence="1">
    <location>
        <begin position="2002"/>
        <end position="2242"/>
    </location>
</feature>
<feature type="chain" id="PRO_0000040491" description="Nuclear inclusion protein B" evidence="1">
    <location>
        <begin position="2243"/>
        <end position="2758"/>
    </location>
</feature>
<feature type="chain" id="PRO_0000040492" description="Capsid protein" evidence="1">
    <location>
        <begin position="2759"/>
        <end position="3023"/>
    </location>
</feature>
<feature type="domain" description="Peptidase S30" evidence="14">
    <location>
        <begin position="132"/>
        <end position="274"/>
    </location>
</feature>
<feature type="domain" description="Peptidase C6" evidence="13">
    <location>
        <begin position="609"/>
        <end position="731"/>
    </location>
</feature>
<feature type="domain" description="Helicase ATP-binding" evidence="10">
    <location>
        <begin position="1202"/>
        <end position="1354"/>
    </location>
</feature>
<feature type="domain" description="Helicase C-terminal" evidence="11">
    <location>
        <begin position="1367"/>
        <end position="1532"/>
    </location>
</feature>
<feature type="domain" description="Peptidase C4" evidence="12">
    <location>
        <begin position="2002"/>
        <end position="2218"/>
    </location>
</feature>
<feature type="domain" description="RdRp catalytic" evidence="9">
    <location>
        <begin position="2484"/>
        <end position="2608"/>
    </location>
</feature>
<feature type="short sequence motif" description="Involved in interaction with stylet and aphid transmission" evidence="1">
    <location>
        <begin position="325"/>
        <end position="328"/>
    </location>
</feature>
<feature type="short sequence motif" description="Involved in virions binding and aphid transmission" evidence="1">
    <location>
        <begin position="583"/>
        <end position="585"/>
    </location>
</feature>
<feature type="short sequence motif" description="DEFH box">
    <location>
        <begin position="1304"/>
        <end position="1307"/>
    </location>
</feature>
<feature type="short sequence motif" description="GxxxG motif" evidence="18">
    <location>
        <begin position="1796"/>
        <end position="1800"/>
    </location>
</feature>
<feature type="short sequence motif" description="Nuclear localization signal" evidence="8">
    <location>
        <begin position="1856"/>
        <end position="1863"/>
    </location>
</feature>
<feature type="active site" description="For P1 proteinase activity" evidence="14">
    <location>
        <position position="183"/>
    </location>
</feature>
<feature type="active site" description="For P1 proteinase activity" evidence="14">
    <location>
        <position position="192"/>
    </location>
</feature>
<feature type="active site" description="For P1 proteinase activity" evidence="14">
    <location>
        <position position="225"/>
    </location>
</feature>
<feature type="active site" description="For helper component proteinase activity" evidence="13">
    <location>
        <position position="617"/>
    </location>
</feature>
<feature type="active site" description="For helper component proteinase activity" evidence="13">
    <location>
        <position position="690"/>
    </location>
</feature>
<feature type="active site" description="For nuclear inclusion protein A activity" evidence="12">
    <location>
        <position position="2047"/>
    </location>
</feature>
<feature type="active site" description="For nuclear inclusion protein A activity" evidence="12">
    <location>
        <position position="2082"/>
    </location>
</feature>
<feature type="active site" description="For nuclear inclusion protein A activity" evidence="12 17">
    <location>
        <position position="2152"/>
    </location>
</feature>
<feature type="binding site" evidence="10">
    <location>
        <begin position="1215"/>
        <end position="1222"/>
    </location>
    <ligand>
        <name>ATP</name>
        <dbReference type="ChEBI" id="CHEBI:30616"/>
    </ligand>
</feature>
<feature type="site" description="Cleavage; by P1 proteinase" evidence="14">
    <location>
        <begin position="274"/>
        <end position="275"/>
    </location>
</feature>
<feature type="site" description="Cleavage; by autolysis" evidence="13">
    <location>
        <begin position="731"/>
        <end position="732"/>
    </location>
</feature>
<feature type="site" description="Cleavage; by NIa-pro" evidence="5">
    <location>
        <begin position="1078"/>
        <end position="1079"/>
    </location>
</feature>
<feature type="site" description="Cleavage; by NIa-pro" evidence="5">
    <location>
        <begin position="1130"/>
        <end position="1131"/>
    </location>
</feature>
<feature type="site" description="Cleavage; by NIa-pro" evidence="5">
    <location>
        <begin position="1765"/>
        <end position="1766"/>
    </location>
</feature>
<feature type="site" description="Cleavage; by NIa-pro" evidence="5">
    <location>
        <begin position="1818"/>
        <end position="1819"/>
    </location>
</feature>
<feature type="site" description="Cleavage; by NIa-pro" evidence="5">
    <location>
        <begin position="2001"/>
        <end position="2002"/>
    </location>
</feature>
<feature type="site" description="Cleavage; by NIa-pro" evidence="5">
    <location>
        <begin position="2242"/>
        <end position="2243"/>
    </location>
</feature>
<feature type="site" description="Cleavage; by NIa-pro" evidence="5">
    <location>
        <begin position="2758"/>
        <end position="2759"/>
    </location>
</feature>
<feature type="modified residue" description="O-(5'-phospho-RNA)-tyrosine" evidence="15">
    <location>
        <position position="1878"/>
    </location>
</feature>
<feature type="modified residue" description="O-UMP-tyrosine; transient" evidence="15">
    <location>
        <position position="1878"/>
    </location>
</feature>
<feature type="modified residue" description="Phosphothreonine" evidence="4">
    <location>
        <position position="3006"/>
    </location>
</feature>
<feature type="mutagenesis site" description="Complete loss of capacity to form vesicles and mislocalization to the Golgi apparatus and plasma membrane." evidence="18">
    <original>GIGLG</original>
    <variation>VIGLV</variation>
    <location>
        <begin position="1796"/>
        <end position="1800"/>
    </location>
</feature>
<feature type="mutagenesis site" description="Complete loss of protease cativity; when associated with A-2068 and A-2152." evidence="17">
    <original>K</original>
    <variation>A</variation>
    <location>
        <position position="2066"/>
    </location>
</feature>
<feature type="mutagenesis site" description="Complete loss of protease cativity; when associated with A-2066 and A-2152." evidence="17">
    <original>K</original>
    <variation>A</variation>
    <location>
        <position position="2068"/>
    </location>
</feature>
<feature type="mutagenesis site" description="Complete loss of protease cativity; when associated with A-2066 and A-2068." evidence="17">
    <original>C</original>
    <variation>A</variation>
    <location>
        <position position="2152"/>
    </location>
</feature>
<feature type="helix" evidence="21">
    <location>
        <begin position="2013"/>
        <end position="2016"/>
    </location>
</feature>
<feature type="strand" evidence="21">
    <location>
        <begin position="2019"/>
        <end position="2026"/>
    </location>
</feature>
<feature type="strand" evidence="21">
    <location>
        <begin position="2029"/>
        <end position="2038"/>
    </location>
</feature>
<feature type="strand" evidence="21">
    <location>
        <begin position="2041"/>
        <end position="2044"/>
    </location>
</feature>
<feature type="helix" evidence="21">
    <location>
        <begin position="2046"/>
        <end position="2049"/>
    </location>
</feature>
<feature type="strand" evidence="21">
    <location>
        <begin position="2055"/>
        <end position="2060"/>
    </location>
</feature>
<feature type="strand" evidence="21">
    <location>
        <begin position="2063"/>
        <end position="2069"/>
    </location>
</feature>
<feature type="helix" evidence="21">
    <location>
        <begin position="2070"/>
        <end position="2072"/>
    </location>
</feature>
<feature type="strand" evidence="21">
    <location>
        <begin position="2075"/>
        <end position="2077"/>
    </location>
</feature>
<feature type="strand" evidence="21">
    <location>
        <begin position="2080"/>
        <end position="2082"/>
    </location>
</feature>
<feature type="strand" evidence="21">
    <location>
        <begin position="2084"/>
        <end position="2087"/>
    </location>
</feature>
<feature type="strand" evidence="21">
    <location>
        <begin position="2110"/>
        <end position="2117"/>
    </location>
</feature>
<feature type="strand" evidence="21">
    <location>
        <begin position="2122"/>
        <end position="2130"/>
    </location>
</feature>
<feature type="strand" evidence="21">
    <location>
        <begin position="2138"/>
        <end position="2143"/>
    </location>
</feature>
<feature type="strand" evidence="21">
    <location>
        <begin position="2155"/>
        <end position="2158"/>
    </location>
</feature>
<feature type="turn" evidence="21">
    <location>
        <begin position="2159"/>
        <end position="2161"/>
    </location>
</feature>
<feature type="strand" evidence="21">
    <location>
        <begin position="2164"/>
        <end position="2172"/>
    </location>
</feature>
<feature type="turn" evidence="21">
    <location>
        <begin position="2173"/>
        <end position="2175"/>
    </location>
</feature>
<feature type="strand" evidence="21">
    <location>
        <begin position="2178"/>
        <end position="2182"/>
    </location>
</feature>
<feature type="helix" evidence="21">
    <location>
        <begin position="2187"/>
        <end position="2191"/>
    </location>
</feature>
<feature type="helix" evidence="21">
    <location>
        <begin position="2206"/>
        <end position="2208"/>
    </location>
</feature>
<feature type="strand" evidence="21">
    <location>
        <begin position="2754"/>
        <end position="2757"/>
    </location>
</feature>